<organism>
    <name type="scientific">Mus musculus</name>
    <name type="common">Mouse</name>
    <dbReference type="NCBI Taxonomy" id="10090"/>
    <lineage>
        <taxon>Eukaryota</taxon>
        <taxon>Metazoa</taxon>
        <taxon>Chordata</taxon>
        <taxon>Craniata</taxon>
        <taxon>Vertebrata</taxon>
        <taxon>Euteleostomi</taxon>
        <taxon>Mammalia</taxon>
        <taxon>Eutheria</taxon>
        <taxon>Euarchontoglires</taxon>
        <taxon>Glires</taxon>
        <taxon>Rodentia</taxon>
        <taxon>Myomorpha</taxon>
        <taxon>Muroidea</taxon>
        <taxon>Muridae</taxon>
        <taxon>Murinae</taxon>
        <taxon>Mus</taxon>
        <taxon>Mus</taxon>
    </lineage>
</organism>
<comment type="function">
    <text evidence="5">Mitochondrial iron transporter that specifically mediates iron uptake in developing erythroid cells, thereby playing an essential role in heme biosynthesis.</text>
</comment>
<comment type="catalytic activity">
    <reaction evidence="5">
        <text>Fe(2+)(in) = Fe(2+)(out)</text>
        <dbReference type="Rhea" id="RHEA:28486"/>
        <dbReference type="ChEBI" id="CHEBI:29033"/>
    </reaction>
</comment>
<comment type="subunit">
    <text evidence="6">Interacts with ACB10; this interaction stabilizes SLC25A37 and enhances the function of SLC25A37 to import mitochondrial iron during erythroid differentiation.</text>
</comment>
<comment type="subcellular location">
    <subcellularLocation>
        <location evidence="1">Mitochondrion inner membrane</location>
        <topology evidence="2">Multi-pass membrane protein</topology>
    </subcellularLocation>
</comment>
<comment type="alternative products">
    <event type="alternative splicing"/>
    <isoform>
        <id>Q920G8-1</id>
        <name>1</name>
        <sequence type="displayed"/>
    </isoform>
    <isoform>
        <id>Q920G8-2</id>
        <name>2</name>
        <sequence type="described" ref="VSP_018411 VSP_018412"/>
    </isoform>
    <isoform>
        <id>Q920G8-3</id>
        <name>3</name>
        <sequence type="described" ref="VSP_018405 VSP_018410"/>
    </isoform>
    <isoform>
        <id>Q920G8-4</id>
        <name>4</name>
        <sequence type="described" ref="VSP_018407 VSP_018408"/>
    </isoform>
    <isoform>
        <id>Q920G8-5</id>
        <name>5</name>
        <sequence type="described" ref="VSP_018406 VSP_018409"/>
    </isoform>
</comment>
<comment type="tissue specificity">
    <text evidence="4 5">Highly expressed in hematopoietic organs, fetal liver, bone marrow and spleen.</text>
</comment>
<comment type="developmental stage">
    <text evidence="5">In the developing embryo, it is first detected at 7.5 dpc in the extraembryonic yolk sac, coincident with the appearance of blood islands. Later, restricted expression is seen in 14.5 dpc fetal liver, the primary source of erythrocyte production in mid-gestation. Expression decreases in the spleen around 4-5 weeks of age, suggesting that it is decreased during splenic lymphocyte maturation.</text>
</comment>
<comment type="disruption phenotype">
    <text evidence="5">Erythroblasts generated from murine embryonic stem cells null for Slc25a37/Mfrn show maturation arrest with severely impaired incorporation of iron into heme.</text>
</comment>
<comment type="similarity">
    <text evidence="9">Belongs to the mitochondrial carrier (TC 2.A.29) family.</text>
</comment>
<comment type="sequence caution" evidence="9">
    <conflict type="erroneous initiation">
        <sequence resource="EMBL-CDS" id="BAB29978"/>
    </conflict>
</comment>
<comment type="sequence caution" evidence="9">
    <conflict type="erroneous initiation">
        <sequence resource="EMBL-CDS" id="BAB29978"/>
    </conflict>
    <text>Extended N-terminus.</text>
</comment>
<comment type="sequence caution" evidence="9">
    <conflict type="frameshift">
        <sequence resource="EMBL-CDS" id="BAC25649"/>
    </conflict>
</comment>
<protein>
    <recommendedName>
        <fullName>Mitoferrin-1</fullName>
    </recommendedName>
    <alternativeName>
        <fullName>Mitochondrial iron transporter 1</fullName>
    </alternativeName>
    <alternativeName>
        <fullName>Mitochondrial solute carrier protein</fullName>
    </alternativeName>
    <alternativeName>
        <fullName>Solute carrier family 25 member 37</fullName>
    </alternativeName>
</protein>
<keyword id="KW-0025">Alternative splicing</keyword>
<keyword id="KW-0903">Direct protein sequencing</keyword>
<keyword id="KW-0406">Ion transport</keyword>
<keyword id="KW-0408">Iron</keyword>
<keyword id="KW-0410">Iron transport</keyword>
<keyword id="KW-0472">Membrane</keyword>
<keyword id="KW-0496">Mitochondrion</keyword>
<keyword id="KW-0999">Mitochondrion inner membrane</keyword>
<keyword id="KW-1185">Reference proteome</keyword>
<keyword id="KW-0677">Repeat</keyword>
<keyword id="KW-0812">Transmembrane</keyword>
<keyword id="KW-1133">Transmembrane helix</keyword>
<keyword id="KW-0813">Transport</keyword>
<feature type="chain" id="PRO_0000235252" description="Mitoferrin-1">
    <location>
        <begin position="1"/>
        <end position="338"/>
    </location>
</feature>
<feature type="transmembrane region" description="Helical; Name=1" evidence="2">
    <location>
        <begin position="45"/>
        <end position="64"/>
    </location>
</feature>
<feature type="transmembrane region" description="Helical; Name=2" evidence="2">
    <location>
        <begin position="106"/>
        <end position="125"/>
    </location>
</feature>
<feature type="transmembrane region" description="Helical; Name=3" evidence="2">
    <location>
        <begin position="143"/>
        <end position="162"/>
    </location>
</feature>
<feature type="transmembrane region" description="Helical; Name=4" evidence="2">
    <location>
        <begin position="200"/>
        <end position="219"/>
    </location>
</feature>
<feature type="transmembrane region" description="Helical; Name=5" evidence="2">
    <location>
        <begin position="234"/>
        <end position="253"/>
    </location>
</feature>
<feature type="transmembrane region" description="Helical; Name=6" evidence="2">
    <location>
        <begin position="301"/>
        <end position="320"/>
    </location>
</feature>
<feature type="repeat" description="Solcar 1">
    <location>
        <begin position="43"/>
        <end position="131"/>
    </location>
</feature>
<feature type="repeat" description="Solcar 2">
    <location>
        <begin position="141"/>
        <end position="225"/>
    </location>
</feature>
<feature type="repeat" description="Solcar 3">
    <location>
        <begin position="232"/>
        <end position="326"/>
    </location>
</feature>
<feature type="region of interest" description="Disordered" evidence="3">
    <location>
        <begin position="1"/>
        <end position="37"/>
    </location>
</feature>
<feature type="splice variant" id="VSP_018405" description="In isoform 3." evidence="8">
    <original>TRMQSLNPDPKARYTSIYGALKRIMHTEGFWRPLRGLNVMMM</original>
    <variation>GHCSASLNLKFINSARMVGPTASWMGLSSLPNAQLVVGTEVL</variation>
    <location>
        <begin position="71"/>
        <end position="112"/>
    </location>
</feature>
<feature type="splice variant" id="VSP_018406" description="In isoform 5." evidence="8">
    <original>TRMQSLNPDPKARYTSIYGALKRIMHTEGFWRPLRGLN</original>
    <variation>GHCSASLNLKFINSARMVGPTASWMGLSSLPNAQDIGK</variation>
    <location>
        <begin position="71"/>
        <end position="108"/>
    </location>
</feature>
<feature type="splice variant" id="VSP_018407" description="In isoform 4." evidence="8">
    <original>TRMQSLNPDPK</original>
    <variation>MDYLSPEKRIY</variation>
    <location>
        <begin position="71"/>
        <end position="81"/>
    </location>
</feature>
<feature type="splice variant" id="VSP_018408" description="In isoform 4." evidence="8">
    <location>
        <begin position="82"/>
        <end position="338"/>
    </location>
</feature>
<feature type="splice variant" id="VSP_018409" description="In isoform 5." evidence="8">
    <location>
        <begin position="109"/>
        <end position="338"/>
    </location>
</feature>
<feature type="splice variant" id="VSP_018410" description="In isoform 3." evidence="8">
    <location>
        <begin position="113"/>
        <end position="338"/>
    </location>
</feature>
<feature type="splice variant" id="VSP_018411" description="In isoform 2." evidence="7 8">
    <original>VAGSMATLLHDAVMNPAEVVKQRLQMYNSQHQSAF</original>
    <variation>ILKAFVWSWEALLSGASSPGPSNLHPRQTENSRVT</variation>
    <location>
        <begin position="148"/>
        <end position="182"/>
    </location>
</feature>
<feature type="splice variant" id="VSP_018412" description="In isoform 2." evidence="7 8">
    <location>
        <begin position="183"/>
        <end position="338"/>
    </location>
</feature>
<feature type="sequence conflict" description="In Ref. 2; BAC25649." evidence="9" ref="2">
    <original>G</original>
    <variation>R</variation>
    <location>
        <position position="115"/>
    </location>
</feature>
<feature type="sequence conflict" description="In Ref. 2; BAC25649." evidence="9" ref="2">
    <original>H</original>
    <variation>P</variation>
    <location>
        <position position="138"/>
    </location>
</feature>
<feature type="sequence conflict" description="In Ref. 2; BAC25649." evidence="9" ref="2">
    <original>N</original>
    <variation>T</variation>
    <location>
        <position position="141"/>
    </location>
</feature>
<evidence type="ECO:0000250" key="1">
    <source>
        <dbReference type="UniProtKB" id="Q287T7"/>
    </source>
</evidence>
<evidence type="ECO:0000255" key="2"/>
<evidence type="ECO:0000256" key="3">
    <source>
        <dbReference type="SAM" id="MobiDB-lite"/>
    </source>
</evidence>
<evidence type="ECO:0000269" key="4">
    <source>
    </source>
</evidence>
<evidence type="ECO:0000269" key="5">
    <source>
    </source>
</evidence>
<evidence type="ECO:0000269" key="6">
    <source>
    </source>
</evidence>
<evidence type="ECO:0000303" key="7">
    <source>
    </source>
</evidence>
<evidence type="ECO:0000303" key="8">
    <source>
    </source>
</evidence>
<evidence type="ECO:0000305" key="9"/>
<reference key="1">
    <citation type="journal article" date="2001" name="Mamm. Genome">
        <title>Rapid decrease of RNA level of a novel mouse mitochondria solute carrier protein (Mscp) gene at 4-5 weeks of age.</title>
        <authorList>
            <person name="Li Q.-Z."/>
            <person name="Eckenrode S."/>
            <person name="Ruan Q.-G."/>
            <person name="Wang C.-Y."/>
            <person name="Shi J.-D."/>
            <person name="McIndoe R.A."/>
            <person name="She J.-X."/>
        </authorList>
    </citation>
    <scope>NUCLEOTIDE SEQUENCE [MRNA] (ISOFORMS 1 AND 2)</scope>
    <scope>TISSUE SPECIFICITY</scope>
</reference>
<reference key="2">
    <citation type="journal article" date="2005" name="Science">
        <title>The transcriptional landscape of the mammalian genome.</title>
        <authorList>
            <person name="Carninci P."/>
            <person name="Kasukawa T."/>
            <person name="Katayama S."/>
            <person name="Gough J."/>
            <person name="Frith M.C."/>
            <person name="Maeda N."/>
            <person name="Oyama R."/>
            <person name="Ravasi T."/>
            <person name="Lenhard B."/>
            <person name="Wells C."/>
            <person name="Kodzius R."/>
            <person name="Shimokawa K."/>
            <person name="Bajic V.B."/>
            <person name="Brenner S.E."/>
            <person name="Batalov S."/>
            <person name="Forrest A.R."/>
            <person name="Zavolan M."/>
            <person name="Davis M.J."/>
            <person name="Wilming L.G."/>
            <person name="Aidinis V."/>
            <person name="Allen J.E."/>
            <person name="Ambesi-Impiombato A."/>
            <person name="Apweiler R."/>
            <person name="Aturaliya R.N."/>
            <person name="Bailey T.L."/>
            <person name="Bansal M."/>
            <person name="Baxter L."/>
            <person name="Beisel K.W."/>
            <person name="Bersano T."/>
            <person name="Bono H."/>
            <person name="Chalk A.M."/>
            <person name="Chiu K.P."/>
            <person name="Choudhary V."/>
            <person name="Christoffels A."/>
            <person name="Clutterbuck D.R."/>
            <person name="Crowe M.L."/>
            <person name="Dalla E."/>
            <person name="Dalrymple B.P."/>
            <person name="de Bono B."/>
            <person name="Della Gatta G."/>
            <person name="di Bernardo D."/>
            <person name="Down T."/>
            <person name="Engstrom P."/>
            <person name="Fagiolini M."/>
            <person name="Faulkner G."/>
            <person name="Fletcher C.F."/>
            <person name="Fukushima T."/>
            <person name="Furuno M."/>
            <person name="Futaki S."/>
            <person name="Gariboldi M."/>
            <person name="Georgii-Hemming P."/>
            <person name="Gingeras T.R."/>
            <person name="Gojobori T."/>
            <person name="Green R.E."/>
            <person name="Gustincich S."/>
            <person name="Harbers M."/>
            <person name="Hayashi Y."/>
            <person name="Hensch T.K."/>
            <person name="Hirokawa N."/>
            <person name="Hill D."/>
            <person name="Huminiecki L."/>
            <person name="Iacono M."/>
            <person name="Ikeo K."/>
            <person name="Iwama A."/>
            <person name="Ishikawa T."/>
            <person name="Jakt M."/>
            <person name="Kanapin A."/>
            <person name="Katoh M."/>
            <person name="Kawasawa Y."/>
            <person name="Kelso J."/>
            <person name="Kitamura H."/>
            <person name="Kitano H."/>
            <person name="Kollias G."/>
            <person name="Krishnan S.P."/>
            <person name="Kruger A."/>
            <person name="Kummerfeld S.K."/>
            <person name="Kurochkin I.V."/>
            <person name="Lareau L.F."/>
            <person name="Lazarevic D."/>
            <person name="Lipovich L."/>
            <person name="Liu J."/>
            <person name="Liuni S."/>
            <person name="McWilliam S."/>
            <person name="Madan Babu M."/>
            <person name="Madera M."/>
            <person name="Marchionni L."/>
            <person name="Matsuda H."/>
            <person name="Matsuzawa S."/>
            <person name="Miki H."/>
            <person name="Mignone F."/>
            <person name="Miyake S."/>
            <person name="Morris K."/>
            <person name="Mottagui-Tabar S."/>
            <person name="Mulder N."/>
            <person name="Nakano N."/>
            <person name="Nakauchi H."/>
            <person name="Ng P."/>
            <person name="Nilsson R."/>
            <person name="Nishiguchi S."/>
            <person name="Nishikawa S."/>
            <person name="Nori F."/>
            <person name="Ohara O."/>
            <person name="Okazaki Y."/>
            <person name="Orlando V."/>
            <person name="Pang K.C."/>
            <person name="Pavan W.J."/>
            <person name="Pavesi G."/>
            <person name="Pesole G."/>
            <person name="Petrovsky N."/>
            <person name="Piazza S."/>
            <person name="Reed J."/>
            <person name="Reid J.F."/>
            <person name="Ring B.Z."/>
            <person name="Ringwald M."/>
            <person name="Rost B."/>
            <person name="Ruan Y."/>
            <person name="Salzberg S.L."/>
            <person name="Sandelin A."/>
            <person name="Schneider C."/>
            <person name="Schoenbach C."/>
            <person name="Sekiguchi K."/>
            <person name="Semple C.A."/>
            <person name="Seno S."/>
            <person name="Sessa L."/>
            <person name="Sheng Y."/>
            <person name="Shibata Y."/>
            <person name="Shimada H."/>
            <person name="Shimada K."/>
            <person name="Silva D."/>
            <person name="Sinclair B."/>
            <person name="Sperling S."/>
            <person name="Stupka E."/>
            <person name="Sugiura K."/>
            <person name="Sultana R."/>
            <person name="Takenaka Y."/>
            <person name="Taki K."/>
            <person name="Tammoja K."/>
            <person name="Tan S.L."/>
            <person name="Tang S."/>
            <person name="Taylor M.S."/>
            <person name="Tegner J."/>
            <person name="Teichmann S.A."/>
            <person name="Ueda H.R."/>
            <person name="van Nimwegen E."/>
            <person name="Verardo R."/>
            <person name="Wei C.L."/>
            <person name="Yagi K."/>
            <person name="Yamanishi H."/>
            <person name="Zabarovsky E."/>
            <person name="Zhu S."/>
            <person name="Zimmer A."/>
            <person name="Hide W."/>
            <person name="Bult C."/>
            <person name="Grimmond S.M."/>
            <person name="Teasdale R.D."/>
            <person name="Liu E.T."/>
            <person name="Brusic V."/>
            <person name="Quackenbush J."/>
            <person name="Wahlestedt C."/>
            <person name="Mattick J.S."/>
            <person name="Hume D.A."/>
            <person name="Kai C."/>
            <person name="Sasaki D."/>
            <person name="Tomaru Y."/>
            <person name="Fukuda S."/>
            <person name="Kanamori-Katayama M."/>
            <person name="Suzuki M."/>
            <person name="Aoki J."/>
            <person name="Arakawa T."/>
            <person name="Iida J."/>
            <person name="Imamura K."/>
            <person name="Itoh M."/>
            <person name="Kato T."/>
            <person name="Kawaji H."/>
            <person name="Kawagashira N."/>
            <person name="Kawashima T."/>
            <person name="Kojima M."/>
            <person name="Kondo S."/>
            <person name="Konno H."/>
            <person name="Nakano K."/>
            <person name="Ninomiya N."/>
            <person name="Nishio T."/>
            <person name="Okada M."/>
            <person name="Plessy C."/>
            <person name="Shibata K."/>
            <person name="Shiraki T."/>
            <person name="Suzuki S."/>
            <person name="Tagami M."/>
            <person name="Waki K."/>
            <person name="Watahiki A."/>
            <person name="Okamura-Oho Y."/>
            <person name="Suzuki H."/>
            <person name="Kawai J."/>
            <person name="Hayashizaki Y."/>
        </authorList>
    </citation>
    <scope>NUCLEOTIDE SEQUENCE [LARGE SCALE MRNA] (ISOFORMS 1; 2; 3; 4 AND 5)</scope>
    <source>
        <strain>C57BL/6J</strain>
        <tissue>Liver</tissue>
        <tissue>Testis</tissue>
    </source>
</reference>
<reference key="3">
    <citation type="submission" date="2009-01" db="UniProtKB">
        <authorList>
            <person name="Lubec G."/>
            <person name="Sunyer B."/>
            <person name="Chen W.-Q."/>
        </authorList>
    </citation>
    <scope>PROTEIN SEQUENCE OF 288-305</scope>
    <scope>IDENTIFICATION BY MASS SPECTROMETRY</scope>
    <source>
        <strain>OF1</strain>
        <tissue>Hippocampus</tissue>
    </source>
</reference>
<reference key="4">
    <citation type="journal article" date="2006" name="Nature">
        <title>Mitoferrin is essential for erythroid iron assimilation.</title>
        <authorList>
            <person name="Shaw G.C."/>
            <person name="Cope J.J."/>
            <person name="Li L."/>
            <person name="Corson K."/>
            <person name="Hersey C."/>
            <person name="Ackermann G.E."/>
            <person name="Gwynn B."/>
            <person name="Lambert A.J."/>
            <person name="Wingert R.A."/>
            <person name="Traver D."/>
            <person name="Trede N.S."/>
            <person name="Barut B.A."/>
            <person name="Zhou Y."/>
            <person name="Minet E."/>
            <person name="Donovan A."/>
            <person name="Brownlie A."/>
            <person name="Balzan R."/>
            <person name="Weiss M.J."/>
            <person name="Peters L.L."/>
            <person name="Kaplan J."/>
            <person name="Zon L.I."/>
            <person name="Paw B.H."/>
        </authorList>
    </citation>
    <scope>FUNCTION</scope>
    <scope>TISSUE SPECIFICITY</scope>
    <scope>DEVELOPMENTAL STAGE</scope>
    <scope>DISRUPTION PHENOTYPE</scope>
    <scope>TRANSPORTER ACTIVITY</scope>
</reference>
<reference key="5">
    <citation type="journal article" date="2009" name="Proc. Natl. Acad. Sci. U.S.A.">
        <title>Abcb10 physically interacts with mitoferrin-1 (Slc25a37) to enhance its stability and function in the erythroid mitochondria.</title>
        <authorList>
            <person name="Chen W."/>
            <person name="Paradkar P.N."/>
            <person name="Li L."/>
            <person name="Pierce E.L."/>
            <person name="Langer N.B."/>
            <person name="Takahashi-Makise N."/>
            <person name="Hyde B.B."/>
            <person name="Shirihai O.S."/>
            <person name="Ward D.M."/>
            <person name="Kaplan J."/>
            <person name="Paw B.H."/>
        </authorList>
    </citation>
    <scope>INTERACTION WITH ABCB10</scope>
</reference>
<reference key="6">
    <citation type="journal article" date="2010" name="Cell">
        <title>A tissue-specific atlas of mouse protein phosphorylation and expression.</title>
        <authorList>
            <person name="Huttlin E.L."/>
            <person name="Jedrychowski M.P."/>
            <person name="Elias J.E."/>
            <person name="Goswami T."/>
            <person name="Rad R."/>
            <person name="Beausoleil S.A."/>
            <person name="Villen J."/>
            <person name="Haas W."/>
            <person name="Sowa M.E."/>
            <person name="Gygi S.P."/>
        </authorList>
    </citation>
    <scope>IDENTIFICATION BY MASS SPECTROMETRY [LARGE SCALE ANALYSIS]</scope>
    <source>
        <tissue>Spleen</tissue>
    </source>
</reference>
<proteinExistence type="evidence at protein level"/>
<name>MFRN1_MOUSE</name>
<sequence length="338" mass="37510">MELRRGGVGNQAAGRRMDGDCRDGGCGSKDAGSEDYENLPTSASVSTHMTAGAMAGILEHSIMYPVDSVKTRMQSLNPDPKARYTSIYGALKRIMHTEGFWRPLRGLNVMMMGAGPAHAMYFACYENMKRTLNDVFSHQGNSHLANGVAGSMATLLHDAVMNPAEVVKQRLQMYNSQHQSAFSCIRTVWRTEGLGAFYRSYTTQLTMNIPFQSIHFITYEFLQEQVNPRRDYNPQSHIISGGLAGALAAAATTPLDVCKTLLNTQENMALSLANVSGRLSGMANAFRTVYQLNGLAGYFKGIQARVIYQMPSTAISWSVYEFFKYILTKRQLENRTLY</sequence>
<gene>
    <name type="primary">Slc25a37</name>
    <name type="synonym">Mfrn</name>
    <name type="synonym">Mscp</name>
</gene>
<dbReference type="EMBL" id="AF288621">
    <property type="protein sequence ID" value="AAL23859.1"/>
    <property type="molecule type" value="mRNA"/>
</dbReference>
<dbReference type="EMBL" id="AF361699">
    <property type="protein sequence ID" value="AAL27990.1"/>
    <property type="molecule type" value="mRNA"/>
</dbReference>
<dbReference type="EMBL" id="AK015790">
    <property type="protein sequence ID" value="BAB29978.1"/>
    <property type="status" value="ALT_INIT"/>
    <property type="molecule type" value="mRNA"/>
</dbReference>
<dbReference type="EMBL" id="AK019700">
    <property type="protein sequence ID" value="BAB31839.2"/>
    <property type="molecule type" value="mRNA"/>
</dbReference>
<dbReference type="EMBL" id="AK021203">
    <property type="protein sequence ID" value="BAC25649.1"/>
    <property type="status" value="ALT_FRAME"/>
    <property type="molecule type" value="mRNA"/>
</dbReference>
<dbReference type="EMBL" id="AK050414">
    <property type="protein sequence ID" value="BAC34243.1"/>
    <property type="molecule type" value="mRNA"/>
</dbReference>
<dbReference type="EMBL" id="AK086749">
    <property type="protein sequence ID" value="BAC39735.1"/>
    <property type="molecule type" value="mRNA"/>
</dbReference>
<dbReference type="CCDS" id="CCDS27238.1">
    <molecule id="Q920G8-1"/>
</dbReference>
<dbReference type="RefSeq" id="NP_080607.2">
    <molecule id="Q920G8-1"/>
    <property type="nucleotide sequence ID" value="NM_026331.3"/>
</dbReference>
<dbReference type="SMR" id="Q920G8"/>
<dbReference type="BioGRID" id="212387">
    <property type="interactions" value="3"/>
</dbReference>
<dbReference type="FunCoup" id="Q920G8">
    <property type="interactions" value="1916"/>
</dbReference>
<dbReference type="STRING" id="10090.ENSMUSP00000039990"/>
<dbReference type="TCDB" id="2.A.29.5.5">
    <property type="family name" value="the mitochondrial carrier (mc) family"/>
</dbReference>
<dbReference type="PhosphoSitePlus" id="Q920G8"/>
<dbReference type="PaxDb" id="10090-ENSMUSP00000039990"/>
<dbReference type="ProteomicsDB" id="292308">
    <molecule id="Q920G8-1"/>
</dbReference>
<dbReference type="ProteomicsDB" id="292309">
    <molecule id="Q920G8-2"/>
</dbReference>
<dbReference type="ProteomicsDB" id="292310">
    <molecule id="Q920G8-3"/>
</dbReference>
<dbReference type="Antibodypedia" id="42015">
    <property type="antibodies" value="158 antibodies from 20 providers"/>
</dbReference>
<dbReference type="DNASU" id="67712"/>
<dbReference type="Ensembl" id="ENSMUST00000037064.5">
    <molecule id="Q920G8-1"/>
    <property type="protein sequence ID" value="ENSMUSP00000039990.4"/>
    <property type="gene ID" value="ENSMUSG00000034248.8"/>
</dbReference>
<dbReference type="Ensembl" id="ENSMUST00000179116.3">
    <molecule id="Q920G8-4"/>
    <property type="protein sequence ID" value="ENSMUSP00000135940.2"/>
    <property type="gene ID" value="ENSMUSG00000093954.9"/>
</dbReference>
<dbReference type="Ensembl" id="ENSMUST00000183695.8">
    <molecule id="Q920G8-3"/>
    <property type="protein sequence ID" value="ENSMUSP00000138883.2"/>
    <property type="gene ID" value="ENSMUSG00000093954.9"/>
</dbReference>
<dbReference type="Ensembl" id="ENSMUST00000183840.8">
    <molecule id="Q920G8-5"/>
    <property type="protein sequence ID" value="ENSMUSP00000138845.2"/>
    <property type="gene ID" value="ENSMUSG00000093954.9"/>
</dbReference>
<dbReference type="Ensembl" id="ENSMUST00000184816.8">
    <molecule id="Q920G8-3"/>
    <property type="protein sequence ID" value="ENSMUSP00000138904.2"/>
    <property type="gene ID" value="ENSMUSG00000093954.9"/>
</dbReference>
<dbReference type="Ensembl" id="ENSMUST00000184914.2">
    <molecule id="Q920G8-2"/>
    <property type="protein sequence ID" value="ENSMUSP00000139104.2"/>
    <property type="gene ID" value="ENSMUSG00000034248.8"/>
</dbReference>
<dbReference type="GeneID" id="67712"/>
<dbReference type="KEGG" id="mmu:67712"/>
<dbReference type="UCSC" id="uc029sla.1">
    <molecule id="Q920G8-1"/>
    <property type="organism name" value="mouse"/>
</dbReference>
<dbReference type="UCSC" id="uc029sll.1">
    <molecule id="Q920G8-4"/>
    <property type="organism name" value="mouse"/>
</dbReference>
<dbReference type="AGR" id="MGI:1914962"/>
<dbReference type="CTD" id="51312"/>
<dbReference type="MGI" id="MGI:1914962">
    <property type="gene designation" value="Slc25a37"/>
</dbReference>
<dbReference type="VEuPathDB" id="HostDB:ENSMUSG00000034248"/>
<dbReference type="VEuPathDB" id="HostDB:ENSMUSG00000093954"/>
<dbReference type="eggNOG" id="KOG0760">
    <property type="taxonomic scope" value="Eukaryota"/>
</dbReference>
<dbReference type="GeneTree" id="ENSGT00940000158607"/>
<dbReference type="GeneTree" id="ENSGT00940000172945"/>
<dbReference type="HOGENOM" id="CLU_015166_3_1_1"/>
<dbReference type="InParanoid" id="Q920G8"/>
<dbReference type="OMA" id="MYNSQHQ"/>
<dbReference type="OrthoDB" id="43906at2759"/>
<dbReference type="PhylomeDB" id="Q920G8"/>
<dbReference type="TreeFam" id="TF314118"/>
<dbReference type="BioGRID-ORCS" id="67712">
    <property type="hits" value="12 hits in 76 CRISPR screens"/>
</dbReference>
<dbReference type="ChiTaRS" id="Slc25a37">
    <property type="organism name" value="mouse"/>
</dbReference>
<dbReference type="PRO" id="PR:Q920G8"/>
<dbReference type="Proteomes" id="UP000000589">
    <property type="component" value="Chromosome 14"/>
</dbReference>
<dbReference type="RNAct" id="Q920G8">
    <property type="molecule type" value="protein"/>
</dbReference>
<dbReference type="Bgee" id="ENSMUSG00000034248">
    <property type="expression patterns" value="Expressed in fetal liver hematopoietic progenitor cell and 240 other cell types or tissues"/>
</dbReference>
<dbReference type="ExpressionAtlas" id="Q920G8">
    <property type="expression patterns" value="baseline and differential"/>
</dbReference>
<dbReference type="GO" id="GO:0005743">
    <property type="term" value="C:mitochondrial inner membrane"/>
    <property type="evidence" value="ECO:0000314"/>
    <property type="project" value="UniProtKB"/>
</dbReference>
<dbReference type="GO" id="GO:0005739">
    <property type="term" value="C:mitochondrion"/>
    <property type="evidence" value="ECO:0000314"/>
    <property type="project" value="UniProtKB"/>
</dbReference>
<dbReference type="GO" id="GO:0015093">
    <property type="term" value="F:ferrous iron transmembrane transporter activity"/>
    <property type="evidence" value="ECO:0000269"/>
    <property type="project" value="Reactome"/>
</dbReference>
<dbReference type="GO" id="GO:0005381">
    <property type="term" value="F:iron ion transmembrane transporter activity"/>
    <property type="evidence" value="ECO:0000315"/>
    <property type="project" value="UniProtKB"/>
</dbReference>
<dbReference type="GO" id="GO:0048250">
    <property type="term" value="P:iron import into the mitochondrion"/>
    <property type="evidence" value="ECO:0000315"/>
    <property type="project" value="UniProtKB"/>
</dbReference>
<dbReference type="GO" id="GO:0046985">
    <property type="term" value="P:positive regulation of hemoglobin biosynthetic process"/>
    <property type="evidence" value="ECO:0000315"/>
    <property type="project" value="UniProtKB"/>
</dbReference>
<dbReference type="FunFam" id="1.50.40.10:FF:000027">
    <property type="entry name" value="mitoferrin-2 isoform X1"/>
    <property type="match status" value="1"/>
</dbReference>
<dbReference type="FunFam" id="1.50.40.10:FF:000031">
    <property type="entry name" value="mitoferrin-2 isoform X1"/>
    <property type="match status" value="1"/>
</dbReference>
<dbReference type="Gene3D" id="1.50.40.10">
    <property type="entry name" value="Mitochondrial carrier domain"/>
    <property type="match status" value="1"/>
</dbReference>
<dbReference type="InterPro" id="IPR018108">
    <property type="entry name" value="Mitochondrial_sb/sol_carrier"/>
</dbReference>
<dbReference type="InterPro" id="IPR023395">
    <property type="entry name" value="Mt_carrier_dom_sf"/>
</dbReference>
<dbReference type="PANTHER" id="PTHR45758:SF4">
    <property type="entry name" value="MITOFERRIN-1"/>
    <property type="match status" value="1"/>
</dbReference>
<dbReference type="PANTHER" id="PTHR45758">
    <property type="entry name" value="MITOFERRIN-1-RELATED"/>
    <property type="match status" value="1"/>
</dbReference>
<dbReference type="Pfam" id="PF00153">
    <property type="entry name" value="Mito_carr"/>
    <property type="match status" value="3"/>
</dbReference>
<dbReference type="SUPFAM" id="SSF103506">
    <property type="entry name" value="Mitochondrial carrier"/>
    <property type="match status" value="1"/>
</dbReference>
<dbReference type="PROSITE" id="PS50920">
    <property type="entry name" value="SOLCAR"/>
    <property type="match status" value="3"/>
</dbReference>
<accession>Q920G8</accession>
<accession>Q8C367</accession>
<accession>Q8CEJ7</accession>
<accession>Q91ZY0</accession>
<accession>Q9D2G3</accession>
<accession>Q9D547</accession>